<comment type="function">
    <text evidence="2">Component of the ubiquinol-cytochrome c reductase complex (complex III or cytochrome b-c1 complex) that is part of the mitochondrial respiratory chain. The b-c1 complex mediates electron transfer from ubiquinol to cytochrome c. Contributes to the generation of a proton gradient across the mitochondrial membrane that is then used for ATP synthesis.</text>
</comment>
<comment type="cofactor">
    <cofactor evidence="2">
        <name>heme b</name>
        <dbReference type="ChEBI" id="CHEBI:60344"/>
    </cofactor>
    <text evidence="2">Binds 2 heme b groups non-covalently.</text>
</comment>
<comment type="subunit">
    <text evidence="2">The cytochrome bc1 complex contains 11 subunits: 3 respiratory subunits (MT-CYB, CYC1 and UQCRFS1), 2 core proteins (UQCRC1 and UQCRC2) and 6 low-molecular weight proteins (UQCRH/QCR6, UQCRB/QCR7, UQCRQ/QCR8, UQCR10/QCR9, UQCR11/QCR10 and a cleavage product of UQCRFS1). This cytochrome bc1 complex then forms a dimer.</text>
</comment>
<comment type="subcellular location">
    <subcellularLocation>
        <location evidence="2">Mitochondrion inner membrane</location>
        <topology evidence="2">Multi-pass membrane protein</topology>
    </subcellularLocation>
</comment>
<comment type="miscellaneous">
    <text evidence="1">Heme 1 (or BL or b562) is low-potential and absorbs at about 562 nm, and heme 2 (or BH or b566) is high-potential and absorbs at about 566 nm.</text>
</comment>
<comment type="similarity">
    <text evidence="3 4">Belongs to the cytochrome b family.</text>
</comment>
<comment type="caution">
    <text evidence="2">The full-length protein contains only eight transmembrane helices, not nine as predicted by bioinformatics tools.</text>
</comment>
<proteinExistence type="inferred from homology"/>
<organism>
    <name type="scientific">Allocebus trichotis</name>
    <name type="common">Hairy-eared dwarf lemur</name>
    <name type="synonym">Cheirogaleus trichotis</name>
    <dbReference type="NCBI Taxonomy" id="3043103"/>
    <lineage>
        <taxon>Eukaryota</taxon>
        <taxon>Metazoa</taxon>
        <taxon>Chordata</taxon>
        <taxon>Craniata</taxon>
        <taxon>Vertebrata</taxon>
        <taxon>Euteleostomi</taxon>
        <taxon>Mammalia</taxon>
        <taxon>Eutheria</taxon>
        <taxon>Euarchontoglires</taxon>
        <taxon>Primates</taxon>
        <taxon>Strepsirrhini</taxon>
        <taxon>Lemuriformes</taxon>
        <taxon>Cheirogaleidae</taxon>
        <taxon>Allocebus</taxon>
    </lineage>
</organism>
<dbReference type="EMBL" id="AY441461">
    <property type="protein sequence ID" value="AAS00142.1"/>
    <property type="molecule type" value="Genomic_DNA"/>
</dbReference>
<dbReference type="SMR" id="Q5VJ52"/>
<dbReference type="GO" id="GO:0005743">
    <property type="term" value="C:mitochondrial inner membrane"/>
    <property type="evidence" value="ECO:0007669"/>
    <property type="project" value="UniProtKB-SubCell"/>
</dbReference>
<dbReference type="GO" id="GO:0045275">
    <property type="term" value="C:respiratory chain complex III"/>
    <property type="evidence" value="ECO:0007669"/>
    <property type="project" value="InterPro"/>
</dbReference>
<dbReference type="GO" id="GO:0046872">
    <property type="term" value="F:metal ion binding"/>
    <property type="evidence" value="ECO:0007669"/>
    <property type="project" value="UniProtKB-KW"/>
</dbReference>
<dbReference type="GO" id="GO:0008121">
    <property type="term" value="F:ubiquinol-cytochrome-c reductase activity"/>
    <property type="evidence" value="ECO:0007669"/>
    <property type="project" value="InterPro"/>
</dbReference>
<dbReference type="GO" id="GO:0006122">
    <property type="term" value="P:mitochondrial electron transport, ubiquinol to cytochrome c"/>
    <property type="evidence" value="ECO:0007669"/>
    <property type="project" value="TreeGrafter"/>
</dbReference>
<dbReference type="CDD" id="cd00290">
    <property type="entry name" value="cytochrome_b_C"/>
    <property type="match status" value="1"/>
</dbReference>
<dbReference type="CDD" id="cd00284">
    <property type="entry name" value="Cytochrome_b_N"/>
    <property type="match status" value="1"/>
</dbReference>
<dbReference type="FunFam" id="1.20.810.10:FF:000002">
    <property type="entry name" value="Cytochrome b"/>
    <property type="match status" value="1"/>
</dbReference>
<dbReference type="Gene3D" id="1.20.810.10">
    <property type="entry name" value="Cytochrome Bc1 Complex, Chain C"/>
    <property type="match status" value="1"/>
</dbReference>
<dbReference type="InterPro" id="IPR005798">
    <property type="entry name" value="Cyt_b/b6_C"/>
</dbReference>
<dbReference type="InterPro" id="IPR036150">
    <property type="entry name" value="Cyt_b/b6_C_sf"/>
</dbReference>
<dbReference type="InterPro" id="IPR005797">
    <property type="entry name" value="Cyt_b/b6_N"/>
</dbReference>
<dbReference type="InterPro" id="IPR027387">
    <property type="entry name" value="Cytb/b6-like_sf"/>
</dbReference>
<dbReference type="InterPro" id="IPR030689">
    <property type="entry name" value="Cytochrome_b"/>
</dbReference>
<dbReference type="InterPro" id="IPR048260">
    <property type="entry name" value="Cytochrome_b_C_euk/bac"/>
</dbReference>
<dbReference type="InterPro" id="IPR048259">
    <property type="entry name" value="Cytochrome_b_N_euk/bac"/>
</dbReference>
<dbReference type="InterPro" id="IPR016174">
    <property type="entry name" value="Di-haem_cyt_TM"/>
</dbReference>
<dbReference type="PANTHER" id="PTHR19271">
    <property type="entry name" value="CYTOCHROME B"/>
    <property type="match status" value="1"/>
</dbReference>
<dbReference type="PANTHER" id="PTHR19271:SF16">
    <property type="entry name" value="CYTOCHROME B"/>
    <property type="match status" value="1"/>
</dbReference>
<dbReference type="Pfam" id="PF00032">
    <property type="entry name" value="Cytochrom_B_C"/>
    <property type="match status" value="1"/>
</dbReference>
<dbReference type="Pfam" id="PF00033">
    <property type="entry name" value="Cytochrome_B"/>
    <property type="match status" value="1"/>
</dbReference>
<dbReference type="PIRSF" id="PIRSF038885">
    <property type="entry name" value="COB"/>
    <property type="match status" value="1"/>
</dbReference>
<dbReference type="SUPFAM" id="SSF81648">
    <property type="entry name" value="a domain/subunit of cytochrome bc1 complex (Ubiquinol-cytochrome c reductase)"/>
    <property type="match status" value="1"/>
</dbReference>
<dbReference type="SUPFAM" id="SSF81342">
    <property type="entry name" value="Transmembrane di-heme cytochromes"/>
    <property type="match status" value="1"/>
</dbReference>
<dbReference type="PROSITE" id="PS51003">
    <property type="entry name" value="CYTB_CTER"/>
    <property type="match status" value="1"/>
</dbReference>
<dbReference type="PROSITE" id="PS51002">
    <property type="entry name" value="CYTB_NTER"/>
    <property type="match status" value="1"/>
</dbReference>
<sequence length="379" mass="42719">MTNIRKIHPLMKVMNNSFIDLPAPSNISSWWNFGSLLGACLAIQIITGLFLAIHYTADTMTAFSSVSHICRDVNQGWTIRYLHANGASMFFLCLFIHVGRGMYYGSFTLPETWNIGIILLFTVMATAFMGYVLPWGQMSFWGATVITNLLSAIPYIGTSLVEWIWGGFSVDKATLTRFFAFHFILPFIIAALVMIHLLFLHETGSNNPLGIASESDKIPFHPYYTIKDLLGLLLLLLLLMTLVLFFPDLLGDPDNYTPANPLNTPPHIKPEWYFLFAYAILRSIPNKLGGVLALITSILILTIIPMLHTAKQRSMTFRPLSQIMFWILTADLSTLTWIGGQPVEHPFIYIGQTASILYFSLILIIIPTVSLMENKMLKW</sequence>
<geneLocation type="mitochondrion"/>
<name>CYB_ALLTR</name>
<protein>
    <recommendedName>
        <fullName>Cytochrome b</fullName>
    </recommendedName>
    <alternativeName>
        <fullName>Complex III subunit 3</fullName>
    </alternativeName>
    <alternativeName>
        <fullName>Complex III subunit III</fullName>
    </alternativeName>
    <alternativeName>
        <fullName>Cytochrome b-c1 complex subunit 3</fullName>
    </alternativeName>
    <alternativeName>
        <fullName>Ubiquinol-cytochrome-c reductase complex cytochrome b subunit</fullName>
    </alternativeName>
</protein>
<accession>Q5VJ52</accession>
<keyword id="KW-0249">Electron transport</keyword>
<keyword id="KW-0349">Heme</keyword>
<keyword id="KW-0408">Iron</keyword>
<keyword id="KW-0472">Membrane</keyword>
<keyword id="KW-0479">Metal-binding</keyword>
<keyword id="KW-0496">Mitochondrion</keyword>
<keyword id="KW-0999">Mitochondrion inner membrane</keyword>
<keyword id="KW-0679">Respiratory chain</keyword>
<keyword id="KW-0812">Transmembrane</keyword>
<keyword id="KW-1133">Transmembrane helix</keyword>
<keyword id="KW-0813">Transport</keyword>
<keyword id="KW-0830">Ubiquinone</keyword>
<reference key="1">
    <citation type="submission" date="2003-10" db="EMBL/GenBank/DDBJ databases">
        <title>61 primate SINEs and the evolution of strepsirrhines.</title>
        <authorList>
            <person name="Roos C."/>
            <person name="Schmitz J."/>
            <person name="Zischler H."/>
        </authorList>
    </citation>
    <scope>NUCLEOTIDE SEQUENCE [GENOMIC DNA]</scope>
</reference>
<feature type="chain" id="PRO_0000060568" description="Cytochrome b">
    <location>
        <begin position="1"/>
        <end position="379"/>
    </location>
</feature>
<feature type="transmembrane region" description="Helical" evidence="2">
    <location>
        <begin position="33"/>
        <end position="53"/>
    </location>
</feature>
<feature type="transmembrane region" description="Helical" evidence="2">
    <location>
        <begin position="77"/>
        <end position="98"/>
    </location>
</feature>
<feature type="transmembrane region" description="Helical" evidence="2">
    <location>
        <begin position="113"/>
        <end position="133"/>
    </location>
</feature>
<feature type="transmembrane region" description="Helical" evidence="2">
    <location>
        <begin position="178"/>
        <end position="198"/>
    </location>
</feature>
<feature type="transmembrane region" description="Helical" evidence="2">
    <location>
        <begin position="226"/>
        <end position="246"/>
    </location>
</feature>
<feature type="transmembrane region" description="Helical" evidence="2">
    <location>
        <begin position="288"/>
        <end position="308"/>
    </location>
</feature>
<feature type="transmembrane region" description="Helical" evidence="2">
    <location>
        <begin position="320"/>
        <end position="340"/>
    </location>
</feature>
<feature type="transmembrane region" description="Helical" evidence="2">
    <location>
        <begin position="347"/>
        <end position="367"/>
    </location>
</feature>
<feature type="binding site" description="axial binding residue" evidence="2">
    <location>
        <position position="83"/>
    </location>
    <ligand>
        <name>heme b</name>
        <dbReference type="ChEBI" id="CHEBI:60344"/>
        <label>b562</label>
    </ligand>
    <ligandPart>
        <name>Fe</name>
        <dbReference type="ChEBI" id="CHEBI:18248"/>
    </ligandPart>
</feature>
<feature type="binding site" description="axial binding residue" evidence="2">
    <location>
        <position position="97"/>
    </location>
    <ligand>
        <name>heme b</name>
        <dbReference type="ChEBI" id="CHEBI:60344"/>
        <label>b566</label>
    </ligand>
    <ligandPart>
        <name>Fe</name>
        <dbReference type="ChEBI" id="CHEBI:18248"/>
    </ligandPart>
</feature>
<feature type="binding site" description="axial binding residue" evidence="2">
    <location>
        <position position="182"/>
    </location>
    <ligand>
        <name>heme b</name>
        <dbReference type="ChEBI" id="CHEBI:60344"/>
        <label>b562</label>
    </ligand>
    <ligandPart>
        <name>Fe</name>
        <dbReference type="ChEBI" id="CHEBI:18248"/>
    </ligandPart>
</feature>
<feature type="binding site" description="axial binding residue" evidence="2">
    <location>
        <position position="196"/>
    </location>
    <ligand>
        <name>heme b</name>
        <dbReference type="ChEBI" id="CHEBI:60344"/>
        <label>b566</label>
    </ligand>
    <ligandPart>
        <name>Fe</name>
        <dbReference type="ChEBI" id="CHEBI:18248"/>
    </ligandPart>
</feature>
<feature type="binding site" evidence="2">
    <location>
        <position position="201"/>
    </location>
    <ligand>
        <name>a ubiquinone</name>
        <dbReference type="ChEBI" id="CHEBI:16389"/>
    </ligand>
</feature>
<gene>
    <name type="primary">MT-CYB</name>
    <name type="synonym">COB</name>
    <name type="synonym">CYTB</name>
    <name type="synonym">MTCYB</name>
</gene>
<evidence type="ECO:0000250" key="1"/>
<evidence type="ECO:0000250" key="2">
    <source>
        <dbReference type="UniProtKB" id="P00157"/>
    </source>
</evidence>
<evidence type="ECO:0000255" key="3">
    <source>
        <dbReference type="PROSITE-ProRule" id="PRU00967"/>
    </source>
</evidence>
<evidence type="ECO:0000255" key="4">
    <source>
        <dbReference type="PROSITE-ProRule" id="PRU00968"/>
    </source>
</evidence>